<dbReference type="EMBL" id="AE016828">
    <property type="protein sequence ID" value="AAO90201.1"/>
    <property type="molecule type" value="Genomic_DNA"/>
</dbReference>
<dbReference type="RefSeq" id="NP_819687.1">
    <property type="nucleotide sequence ID" value="NC_002971.4"/>
</dbReference>
<dbReference type="RefSeq" id="WP_005771885.1">
    <property type="nucleotide sequence ID" value="NZ_CDBG01000001.1"/>
</dbReference>
<dbReference type="SMR" id="Q83DP0"/>
<dbReference type="STRING" id="227377.CBU_0657"/>
<dbReference type="DNASU" id="1208542"/>
<dbReference type="EnsemblBacteria" id="AAO90201">
    <property type="protein sequence ID" value="AAO90201"/>
    <property type="gene ID" value="CBU_0657"/>
</dbReference>
<dbReference type="GeneID" id="1208542"/>
<dbReference type="KEGG" id="cbu:CBU_0657"/>
<dbReference type="PATRIC" id="fig|227377.7.peg.640"/>
<dbReference type="eggNOG" id="COG0353">
    <property type="taxonomic scope" value="Bacteria"/>
</dbReference>
<dbReference type="HOGENOM" id="CLU_060739_1_2_6"/>
<dbReference type="OrthoDB" id="9802672at2"/>
<dbReference type="Proteomes" id="UP000002671">
    <property type="component" value="Chromosome"/>
</dbReference>
<dbReference type="GO" id="GO:0003677">
    <property type="term" value="F:DNA binding"/>
    <property type="evidence" value="ECO:0007669"/>
    <property type="project" value="UniProtKB-UniRule"/>
</dbReference>
<dbReference type="GO" id="GO:0008270">
    <property type="term" value="F:zinc ion binding"/>
    <property type="evidence" value="ECO:0007669"/>
    <property type="project" value="UniProtKB-KW"/>
</dbReference>
<dbReference type="GO" id="GO:0006302">
    <property type="term" value="P:double-strand break repair"/>
    <property type="evidence" value="ECO:0000318"/>
    <property type="project" value="GO_Central"/>
</dbReference>
<dbReference type="GO" id="GO:0000725">
    <property type="term" value="P:recombinational repair"/>
    <property type="evidence" value="ECO:0000318"/>
    <property type="project" value="GO_Central"/>
</dbReference>
<dbReference type="CDD" id="cd01025">
    <property type="entry name" value="TOPRIM_recR"/>
    <property type="match status" value="1"/>
</dbReference>
<dbReference type="Gene3D" id="3.40.1360.10">
    <property type="match status" value="1"/>
</dbReference>
<dbReference type="Gene3D" id="6.10.250.240">
    <property type="match status" value="1"/>
</dbReference>
<dbReference type="Gene3D" id="1.10.8.420">
    <property type="entry name" value="RecR Domain 1"/>
    <property type="match status" value="1"/>
</dbReference>
<dbReference type="HAMAP" id="MF_00017">
    <property type="entry name" value="RecR"/>
    <property type="match status" value="1"/>
</dbReference>
<dbReference type="InterPro" id="IPR000093">
    <property type="entry name" value="DNA_Rcmb_RecR"/>
</dbReference>
<dbReference type="InterPro" id="IPR023627">
    <property type="entry name" value="Rcmb_RecR"/>
</dbReference>
<dbReference type="InterPro" id="IPR015967">
    <property type="entry name" value="Rcmb_RecR_Znf"/>
</dbReference>
<dbReference type="InterPro" id="IPR006171">
    <property type="entry name" value="TOPRIM_dom"/>
</dbReference>
<dbReference type="InterPro" id="IPR034137">
    <property type="entry name" value="TOPRIM_RecR"/>
</dbReference>
<dbReference type="NCBIfam" id="TIGR00615">
    <property type="entry name" value="recR"/>
    <property type="match status" value="1"/>
</dbReference>
<dbReference type="PANTHER" id="PTHR30446">
    <property type="entry name" value="RECOMBINATION PROTEIN RECR"/>
    <property type="match status" value="1"/>
</dbReference>
<dbReference type="PANTHER" id="PTHR30446:SF0">
    <property type="entry name" value="RECOMBINATION PROTEIN RECR"/>
    <property type="match status" value="1"/>
</dbReference>
<dbReference type="Pfam" id="PF21175">
    <property type="entry name" value="RecR_C"/>
    <property type="match status" value="1"/>
</dbReference>
<dbReference type="Pfam" id="PF21176">
    <property type="entry name" value="RecR_HhH"/>
    <property type="match status" value="1"/>
</dbReference>
<dbReference type="Pfam" id="PF02132">
    <property type="entry name" value="RecR_ZnF"/>
    <property type="match status" value="1"/>
</dbReference>
<dbReference type="Pfam" id="PF13662">
    <property type="entry name" value="Toprim_4"/>
    <property type="match status" value="1"/>
</dbReference>
<dbReference type="SMART" id="SM00493">
    <property type="entry name" value="TOPRIM"/>
    <property type="match status" value="1"/>
</dbReference>
<dbReference type="SUPFAM" id="SSF111304">
    <property type="entry name" value="Recombination protein RecR"/>
    <property type="match status" value="1"/>
</dbReference>
<dbReference type="PROSITE" id="PS01300">
    <property type="entry name" value="RECR"/>
    <property type="match status" value="1"/>
</dbReference>
<dbReference type="PROSITE" id="PS50880">
    <property type="entry name" value="TOPRIM"/>
    <property type="match status" value="1"/>
</dbReference>
<sequence length="201" mass="21840">MFSPLTKQLIEALQCLPGIGPKSAQRMAFHLLAKSGQAKGLALSDALQSAIRQVGECKLCQIYTEQPLCNICNNPKRDSTLLCVVESPADVVAIEQTQIYSGRYFVLHGHLSPLDGIGPQEIGIPALLDRLRNETIKELIIATNATMEGKATAHYVANHIDHTKIKCSRIAHGVPMGGELEYLDGGTLIHALHSRIPVEDN</sequence>
<name>RECR_COXBU</name>
<organism>
    <name type="scientific">Coxiella burnetii (strain RSA 493 / Nine Mile phase I)</name>
    <dbReference type="NCBI Taxonomy" id="227377"/>
    <lineage>
        <taxon>Bacteria</taxon>
        <taxon>Pseudomonadati</taxon>
        <taxon>Pseudomonadota</taxon>
        <taxon>Gammaproteobacteria</taxon>
        <taxon>Legionellales</taxon>
        <taxon>Coxiellaceae</taxon>
        <taxon>Coxiella</taxon>
    </lineage>
</organism>
<protein>
    <recommendedName>
        <fullName evidence="1">Recombination protein RecR</fullName>
    </recommendedName>
</protein>
<accession>Q83DP0</accession>
<gene>
    <name evidence="1" type="primary">recR</name>
    <name type="ordered locus">CBU_0657</name>
</gene>
<evidence type="ECO:0000255" key="1">
    <source>
        <dbReference type="HAMAP-Rule" id="MF_00017"/>
    </source>
</evidence>
<feature type="chain" id="PRO_0000190314" description="Recombination protein RecR">
    <location>
        <begin position="1"/>
        <end position="201"/>
    </location>
</feature>
<feature type="domain" description="Toprim" evidence="1">
    <location>
        <begin position="80"/>
        <end position="175"/>
    </location>
</feature>
<feature type="zinc finger region" description="C4-type" evidence="1">
    <location>
        <begin position="57"/>
        <end position="72"/>
    </location>
</feature>
<proteinExistence type="inferred from homology"/>
<keyword id="KW-0227">DNA damage</keyword>
<keyword id="KW-0233">DNA recombination</keyword>
<keyword id="KW-0234">DNA repair</keyword>
<keyword id="KW-0479">Metal-binding</keyword>
<keyword id="KW-1185">Reference proteome</keyword>
<keyword id="KW-0862">Zinc</keyword>
<keyword id="KW-0863">Zinc-finger</keyword>
<comment type="function">
    <text evidence="1">May play a role in DNA repair. It seems to be involved in an RecBC-independent recombinational process of DNA repair. It may act with RecF and RecO.</text>
</comment>
<comment type="similarity">
    <text evidence="1">Belongs to the RecR family.</text>
</comment>
<reference key="1">
    <citation type="journal article" date="2003" name="Proc. Natl. Acad. Sci. U.S.A.">
        <title>Complete genome sequence of the Q-fever pathogen, Coxiella burnetii.</title>
        <authorList>
            <person name="Seshadri R."/>
            <person name="Paulsen I.T."/>
            <person name="Eisen J.A."/>
            <person name="Read T.D."/>
            <person name="Nelson K.E."/>
            <person name="Nelson W.C."/>
            <person name="Ward N.L."/>
            <person name="Tettelin H."/>
            <person name="Davidsen T.M."/>
            <person name="Beanan M.J."/>
            <person name="DeBoy R.T."/>
            <person name="Daugherty S.C."/>
            <person name="Brinkac L.M."/>
            <person name="Madupu R."/>
            <person name="Dodson R.J."/>
            <person name="Khouri H.M."/>
            <person name="Lee K.H."/>
            <person name="Carty H.A."/>
            <person name="Scanlan D."/>
            <person name="Heinzen R.A."/>
            <person name="Thompson H.A."/>
            <person name="Samuel J.E."/>
            <person name="Fraser C.M."/>
            <person name="Heidelberg J.F."/>
        </authorList>
    </citation>
    <scope>NUCLEOTIDE SEQUENCE [LARGE SCALE GENOMIC DNA]</scope>
    <source>
        <strain>RSA 493 / Nine Mile phase I</strain>
    </source>
</reference>